<gene>
    <name type="primary">rpsU</name>
    <name type="ordered locus">c3816</name>
</gene>
<comment type="similarity">
    <text evidence="3">Belongs to the bacterial ribosomal protein bS21 family.</text>
</comment>
<protein>
    <recommendedName>
        <fullName evidence="3">Small ribosomal subunit protein bS21</fullName>
    </recommendedName>
    <alternativeName>
        <fullName>30S ribosomal protein S21</fullName>
    </alternativeName>
</protein>
<accession>P68680</accession>
<accession>P02379</accession>
<accession>Q8ZI69</accession>
<organism>
    <name type="scientific">Escherichia coli O6:H1 (strain CFT073 / ATCC 700928 / UPEC)</name>
    <dbReference type="NCBI Taxonomy" id="199310"/>
    <lineage>
        <taxon>Bacteria</taxon>
        <taxon>Pseudomonadati</taxon>
        <taxon>Pseudomonadota</taxon>
        <taxon>Gammaproteobacteria</taxon>
        <taxon>Enterobacterales</taxon>
        <taxon>Enterobacteriaceae</taxon>
        <taxon>Escherichia</taxon>
    </lineage>
</organism>
<reference key="1">
    <citation type="journal article" date="2002" name="Proc. Natl. Acad. Sci. U.S.A.">
        <title>Extensive mosaic structure revealed by the complete genome sequence of uropathogenic Escherichia coli.</title>
        <authorList>
            <person name="Welch R.A."/>
            <person name="Burland V."/>
            <person name="Plunkett G. III"/>
            <person name="Redford P."/>
            <person name="Roesch P."/>
            <person name="Rasko D."/>
            <person name="Buckles E.L."/>
            <person name="Liou S.-R."/>
            <person name="Boutin A."/>
            <person name="Hackett J."/>
            <person name="Stroud D."/>
            <person name="Mayhew G.F."/>
            <person name="Rose D.J."/>
            <person name="Zhou S."/>
            <person name="Schwartz D.C."/>
            <person name="Perna N.T."/>
            <person name="Mobley H.L.T."/>
            <person name="Donnenberg M.S."/>
            <person name="Blattner F.R."/>
        </authorList>
    </citation>
    <scope>NUCLEOTIDE SEQUENCE [LARGE SCALE GENOMIC DNA]</scope>
    <source>
        <strain>CFT073 / ATCC 700928 / UPEC</strain>
    </source>
</reference>
<feature type="initiator methionine" description="Removed" evidence="1">
    <location>
        <position position="1"/>
    </location>
</feature>
<feature type="chain" id="PRO_0000178333" description="Small ribosomal subunit protein bS21">
    <location>
        <begin position="2"/>
        <end position="71"/>
    </location>
</feature>
<feature type="region of interest" description="Disordered" evidence="2">
    <location>
        <begin position="43"/>
        <end position="71"/>
    </location>
</feature>
<feature type="compositionally biased region" description="Basic residues" evidence="2">
    <location>
        <begin position="46"/>
        <end position="59"/>
    </location>
</feature>
<feature type="compositionally biased region" description="Basic and acidic residues" evidence="2">
    <location>
        <begin position="60"/>
        <end position="71"/>
    </location>
</feature>
<evidence type="ECO:0000250" key="1"/>
<evidence type="ECO:0000256" key="2">
    <source>
        <dbReference type="SAM" id="MobiDB-lite"/>
    </source>
</evidence>
<evidence type="ECO:0000305" key="3"/>
<keyword id="KW-1185">Reference proteome</keyword>
<keyword id="KW-0687">Ribonucleoprotein</keyword>
<keyword id="KW-0689">Ribosomal protein</keyword>
<sequence>MPVIKVRENEPFDVALRRFKRSCEKAGVLAEVRRREFYEKPTTERKRAKASAVKRHAKKLARENARRTRLY</sequence>
<dbReference type="EMBL" id="AE014075">
    <property type="protein sequence ID" value="AAN82261.1"/>
    <property type="molecule type" value="Genomic_DNA"/>
</dbReference>
<dbReference type="RefSeq" id="WP_001144069.1">
    <property type="nucleotide sequence ID" value="NZ_CP051263.1"/>
</dbReference>
<dbReference type="SMR" id="P68680"/>
<dbReference type="STRING" id="199310.c3816"/>
<dbReference type="GeneID" id="98390195"/>
<dbReference type="KEGG" id="ecc:c3816"/>
<dbReference type="eggNOG" id="COG0828">
    <property type="taxonomic scope" value="Bacteria"/>
</dbReference>
<dbReference type="HOGENOM" id="CLU_159258_1_0_6"/>
<dbReference type="BioCyc" id="ECOL199310:C3816-MONOMER"/>
<dbReference type="Proteomes" id="UP000001410">
    <property type="component" value="Chromosome"/>
</dbReference>
<dbReference type="GO" id="GO:1990904">
    <property type="term" value="C:ribonucleoprotein complex"/>
    <property type="evidence" value="ECO:0007669"/>
    <property type="project" value="UniProtKB-KW"/>
</dbReference>
<dbReference type="GO" id="GO:0005840">
    <property type="term" value="C:ribosome"/>
    <property type="evidence" value="ECO:0007669"/>
    <property type="project" value="UniProtKB-KW"/>
</dbReference>
<dbReference type="GO" id="GO:0003735">
    <property type="term" value="F:structural constituent of ribosome"/>
    <property type="evidence" value="ECO:0007669"/>
    <property type="project" value="InterPro"/>
</dbReference>
<dbReference type="GO" id="GO:0006412">
    <property type="term" value="P:translation"/>
    <property type="evidence" value="ECO:0007669"/>
    <property type="project" value="UniProtKB-UniRule"/>
</dbReference>
<dbReference type="FunFam" id="1.20.5.1150:FF:000001">
    <property type="entry name" value="30S ribosomal protein S21"/>
    <property type="match status" value="1"/>
</dbReference>
<dbReference type="Gene3D" id="1.20.5.1150">
    <property type="entry name" value="Ribosomal protein S8"/>
    <property type="match status" value="1"/>
</dbReference>
<dbReference type="HAMAP" id="MF_00358">
    <property type="entry name" value="Ribosomal_bS21"/>
    <property type="match status" value="1"/>
</dbReference>
<dbReference type="InterPro" id="IPR001911">
    <property type="entry name" value="Ribosomal_bS21"/>
</dbReference>
<dbReference type="InterPro" id="IPR018278">
    <property type="entry name" value="Ribosomal_bS21_CS"/>
</dbReference>
<dbReference type="InterPro" id="IPR038380">
    <property type="entry name" value="Ribosomal_bS21_sf"/>
</dbReference>
<dbReference type="NCBIfam" id="TIGR00030">
    <property type="entry name" value="S21p"/>
    <property type="match status" value="1"/>
</dbReference>
<dbReference type="PANTHER" id="PTHR21109">
    <property type="entry name" value="MITOCHONDRIAL 28S RIBOSOMAL PROTEIN S21"/>
    <property type="match status" value="1"/>
</dbReference>
<dbReference type="PANTHER" id="PTHR21109:SF22">
    <property type="entry name" value="SMALL RIBOSOMAL SUBUNIT PROTEIN BS21"/>
    <property type="match status" value="1"/>
</dbReference>
<dbReference type="Pfam" id="PF01165">
    <property type="entry name" value="Ribosomal_S21"/>
    <property type="match status" value="1"/>
</dbReference>
<dbReference type="PRINTS" id="PR00976">
    <property type="entry name" value="RIBOSOMALS21"/>
</dbReference>
<dbReference type="PROSITE" id="PS01181">
    <property type="entry name" value="RIBOSOMAL_S21"/>
    <property type="match status" value="1"/>
</dbReference>
<name>RS21_ECOL6</name>
<proteinExistence type="inferred from homology"/>